<feature type="chain" id="PRO_1000012211" description="Lipoyl synthase">
    <location>
        <begin position="1"/>
        <end position="348"/>
    </location>
</feature>
<feature type="domain" description="Radical SAM core" evidence="2">
    <location>
        <begin position="67"/>
        <end position="281"/>
    </location>
</feature>
<feature type="binding site" evidence="1">
    <location>
        <position position="55"/>
    </location>
    <ligand>
        <name>[4Fe-4S] cluster</name>
        <dbReference type="ChEBI" id="CHEBI:49883"/>
        <label>1</label>
    </ligand>
</feature>
<feature type="binding site" evidence="1">
    <location>
        <position position="60"/>
    </location>
    <ligand>
        <name>[4Fe-4S] cluster</name>
        <dbReference type="ChEBI" id="CHEBI:49883"/>
        <label>1</label>
    </ligand>
</feature>
<feature type="binding site" evidence="1">
    <location>
        <position position="66"/>
    </location>
    <ligand>
        <name>[4Fe-4S] cluster</name>
        <dbReference type="ChEBI" id="CHEBI:49883"/>
        <label>1</label>
    </ligand>
</feature>
<feature type="binding site" evidence="1">
    <location>
        <position position="81"/>
    </location>
    <ligand>
        <name>[4Fe-4S] cluster</name>
        <dbReference type="ChEBI" id="CHEBI:49883"/>
        <label>2</label>
        <note>4Fe-4S-S-AdoMet</note>
    </ligand>
</feature>
<feature type="binding site" evidence="1">
    <location>
        <position position="85"/>
    </location>
    <ligand>
        <name>[4Fe-4S] cluster</name>
        <dbReference type="ChEBI" id="CHEBI:49883"/>
        <label>2</label>
        <note>4Fe-4S-S-AdoMet</note>
    </ligand>
</feature>
<feature type="binding site" evidence="1">
    <location>
        <position position="88"/>
    </location>
    <ligand>
        <name>[4Fe-4S] cluster</name>
        <dbReference type="ChEBI" id="CHEBI:49883"/>
        <label>2</label>
        <note>4Fe-4S-S-AdoMet</note>
    </ligand>
</feature>
<feature type="binding site" evidence="1">
    <location>
        <position position="292"/>
    </location>
    <ligand>
        <name>[4Fe-4S] cluster</name>
        <dbReference type="ChEBI" id="CHEBI:49883"/>
        <label>1</label>
    </ligand>
</feature>
<protein>
    <recommendedName>
        <fullName evidence="1">Lipoyl synthase</fullName>
        <ecNumber evidence="1">2.8.1.8</ecNumber>
    </recommendedName>
    <alternativeName>
        <fullName evidence="1">Lip-syn</fullName>
        <shortName evidence="1">LS</shortName>
    </alternativeName>
    <alternativeName>
        <fullName evidence="1">Lipoate synthase</fullName>
    </alternativeName>
    <alternativeName>
        <fullName evidence="1">Lipoic acid synthase</fullName>
    </alternativeName>
    <alternativeName>
        <fullName evidence="1">Sulfur insertion protein LipA</fullName>
    </alternativeName>
</protein>
<gene>
    <name evidence="1" type="primary">lipA</name>
    <name type="ordered locus">cgR_2089</name>
</gene>
<sequence length="348" mass="39311">MTIAPEGRRLLRVEARNSETPIETKPRWIRNQVKNGPEYQDMKERVAGASLHTVCQEAGCPNIHECWESREATFLIGGANCSRRCDFCMINSARPEPLDRGEPLRVAESVREMQLNYSTITGVTRDDLDDEGAWLYSEVVRKIHELNPHTGVENLVPDFSGKKDLLQEVFESRPEVFAHNVETVPRIFKRIRPAFRYERSLDVIRQARDFGLVTKSNLILGMGETKEEITEALQDLHDAGCDIITITQYLRPGPLFHPIERWVKPEEFLEHADAAKEMGFAAVMSGPLVRSSYRAGRLYAQAMEFRGEEIPAHLAHLKDTSGGSTAQEASTLLERYGASEDTPVVSFN</sequence>
<accession>A4QFS3</accession>
<proteinExistence type="inferred from homology"/>
<name>LIPA_CORGB</name>
<dbReference type="EC" id="2.8.1.8" evidence="1"/>
<dbReference type="EMBL" id="AP009044">
    <property type="protein sequence ID" value="BAF55089.1"/>
    <property type="molecule type" value="Genomic_DNA"/>
</dbReference>
<dbReference type="RefSeq" id="WP_003856634.1">
    <property type="nucleotide sequence ID" value="NC_009342.1"/>
</dbReference>
<dbReference type="SMR" id="A4QFS3"/>
<dbReference type="GeneID" id="1020160"/>
<dbReference type="KEGG" id="cgt:cgR_2089"/>
<dbReference type="HOGENOM" id="CLU_033144_2_1_11"/>
<dbReference type="PhylomeDB" id="A4QFS3"/>
<dbReference type="UniPathway" id="UPA00538">
    <property type="reaction ID" value="UER00593"/>
</dbReference>
<dbReference type="Proteomes" id="UP000006698">
    <property type="component" value="Chromosome"/>
</dbReference>
<dbReference type="GO" id="GO:0005737">
    <property type="term" value="C:cytoplasm"/>
    <property type="evidence" value="ECO:0007669"/>
    <property type="project" value="UniProtKB-SubCell"/>
</dbReference>
<dbReference type="GO" id="GO:0051539">
    <property type="term" value="F:4 iron, 4 sulfur cluster binding"/>
    <property type="evidence" value="ECO:0007669"/>
    <property type="project" value="UniProtKB-UniRule"/>
</dbReference>
<dbReference type="GO" id="GO:0016992">
    <property type="term" value="F:lipoate synthase activity"/>
    <property type="evidence" value="ECO:0007669"/>
    <property type="project" value="UniProtKB-UniRule"/>
</dbReference>
<dbReference type="GO" id="GO:0046872">
    <property type="term" value="F:metal ion binding"/>
    <property type="evidence" value="ECO:0007669"/>
    <property type="project" value="UniProtKB-KW"/>
</dbReference>
<dbReference type="CDD" id="cd01335">
    <property type="entry name" value="Radical_SAM"/>
    <property type="match status" value="1"/>
</dbReference>
<dbReference type="Gene3D" id="3.20.20.70">
    <property type="entry name" value="Aldolase class I"/>
    <property type="match status" value="1"/>
</dbReference>
<dbReference type="HAMAP" id="MF_00206">
    <property type="entry name" value="Lipoyl_synth"/>
    <property type="match status" value="1"/>
</dbReference>
<dbReference type="InterPro" id="IPR013785">
    <property type="entry name" value="Aldolase_TIM"/>
</dbReference>
<dbReference type="InterPro" id="IPR006638">
    <property type="entry name" value="Elp3/MiaA/NifB-like_rSAM"/>
</dbReference>
<dbReference type="InterPro" id="IPR003698">
    <property type="entry name" value="Lipoyl_synth"/>
</dbReference>
<dbReference type="InterPro" id="IPR007197">
    <property type="entry name" value="rSAM"/>
</dbReference>
<dbReference type="NCBIfam" id="TIGR00510">
    <property type="entry name" value="lipA"/>
    <property type="match status" value="1"/>
</dbReference>
<dbReference type="NCBIfam" id="NF004019">
    <property type="entry name" value="PRK05481.1"/>
    <property type="match status" value="1"/>
</dbReference>
<dbReference type="NCBIfam" id="NF009544">
    <property type="entry name" value="PRK12928.1"/>
    <property type="match status" value="1"/>
</dbReference>
<dbReference type="PANTHER" id="PTHR10949">
    <property type="entry name" value="LIPOYL SYNTHASE"/>
    <property type="match status" value="1"/>
</dbReference>
<dbReference type="PANTHER" id="PTHR10949:SF0">
    <property type="entry name" value="LIPOYL SYNTHASE, MITOCHONDRIAL"/>
    <property type="match status" value="1"/>
</dbReference>
<dbReference type="Pfam" id="PF04055">
    <property type="entry name" value="Radical_SAM"/>
    <property type="match status" value="1"/>
</dbReference>
<dbReference type="PIRSF" id="PIRSF005963">
    <property type="entry name" value="Lipoyl_synth"/>
    <property type="match status" value="1"/>
</dbReference>
<dbReference type="SFLD" id="SFLDF00271">
    <property type="entry name" value="lipoyl_synthase"/>
    <property type="match status" value="1"/>
</dbReference>
<dbReference type="SFLD" id="SFLDS00029">
    <property type="entry name" value="Radical_SAM"/>
    <property type="match status" value="1"/>
</dbReference>
<dbReference type="SMART" id="SM00729">
    <property type="entry name" value="Elp3"/>
    <property type="match status" value="1"/>
</dbReference>
<dbReference type="SUPFAM" id="SSF102114">
    <property type="entry name" value="Radical SAM enzymes"/>
    <property type="match status" value="1"/>
</dbReference>
<dbReference type="PROSITE" id="PS51918">
    <property type="entry name" value="RADICAL_SAM"/>
    <property type="match status" value="1"/>
</dbReference>
<evidence type="ECO:0000255" key="1">
    <source>
        <dbReference type="HAMAP-Rule" id="MF_00206"/>
    </source>
</evidence>
<evidence type="ECO:0000255" key="2">
    <source>
        <dbReference type="PROSITE-ProRule" id="PRU01266"/>
    </source>
</evidence>
<comment type="function">
    <text evidence="1">Catalyzes the radical-mediated insertion of two sulfur atoms into the C-6 and C-8 positions of the octanoyl moiety bound to the lipoyl domains of lipoate-dependent enzymes, thereby converting the octanoylated domains into lipoylated derivatives.</text>
</comment>
<comment type="catalytic activity">
    <reaction evidence="1">
        <text>[[Fe-S] cluster scaffold protein carrying a second [4Fe-4S](2+) cluster] + N(6)-octanoyl-L-lysyl-[protein] + 2 oxidized [2Fe-2S]-[ferredoxin] + 2 S-adenosyl-L-methionine + 4 H(+) = [[Fe-S] cluster scaffold protein] + N(6)-[(R)-dihydrolipoyl]-L-lysyl-[protein] + 4 Fe(3+) + 2 hydrogen sulfide + 2 5'-deoxyadenosine + 2 L-methionine + 2 reduced [2Fe-2S]-[ferredoxin]</text>
        <dbReference type="Rhea" id="RHEA:16585"/>
        <dbReference type="Rhea" id="RHEA-COMP:9928"/>
        <dbReference type="Rhea" id="RHEA-COMP:10000"/>
        <dbReference type="Rhea" id="RHEA-COMP:10001"/>
        <dbReference type="Rhea" id="RHEA-COMP:10475"/>
        <dbReference type="Rhea" id="RHEA-COMP:14568"/>
        <dbReference type="Rhea" id="RHEA-COMP:14569"/>
        <dbReference type="ChEBI" id="CHEBI:15378"/>
        <dbReference type="ChEBI" id="CHEBI:17319"/>
        <dbReference type="ChEBI" id="CHEBI:29034"/>
        <dbReference type="ChEBI" id="CHEBI:29919"/>
        <dbReference type="ChEBI" id="CHEBI:33722"/>
        <dbReference type="ChEBI" id="CHEBI:33737"/>
        <dbReference type="ChEBI" id="CHEBI:33738"/>
        <dbReference type="ChEBI" id="CHEBI:57844"/>
        <dbReference type="ChEBI" id="CHEBI:59789"/>
        <dbReference type="ChEBI" id="CHEBI:78809"/>
        <dbReference type="ChEBI" id="CHEBI:83100"/>
        <dbReference type="EC" id="2.8.1.8"/>
    </reaction>
</comment>
<comment type="cofactor">
    <cofactor evidence="1">
        <name>[4Fe-4S] cluster</name>
        <dbReference type="ChEBI" id="CHEBI:49883"/>
    </cofactor>
    <text evidence="1">Binds 2 [4Fe-4S] clusters per subunit. One cluster is coordinated with 3 cysteines and an exchangeable S-adenosyl-L-methionine.</text>
</comment>
<comment type="pathway">
    <text evidence="1">Protein modification; protein lipoylation via endogenous pathway; protein N(6)-(lipoyl)lysine from octanoyl-[acyl-carrier-protein]: step 2/2.</text>
</comment>
<comment type="subcellular location">
    <subcellularLocation>
        <location evidence="1">Cytoplasm</location>
    </subcellularLocation>
</comment>
<comment type="similarity">
    <text evidence="1">Belongs to the radical SAM superfamily. Lipoyl synthase family.</text>
</comment>
<keyword id="KW-0004">4Fe-4S</keyword>
<keyword id="KW-0963">Cytoplasm</keyword>
<keyword id="KW-0408">Iron</keyword>
<keyword id="KW-0411">Iron-sulfur</keyword>
<keyword id="KW-0479">Metal-binding</keyword>
<keyword id="KW-0949">S-adenosyl-L-methionine</keyword>
<keyword id="KW-0808">Transferase</keyword>
<reference key="1">
    <citation type="journal article" date="2007" name="Microbiology">
        <title>Comparative analysis of the Corynebacterium glutamicum group and complete genome sequence of strain R.</title>
        <authorList>
            <person name="Yukawa H."/>
            <person name="Omumasaba C.A."/>
            <person name="Nonaka H."/>
            <person name="Kos P."/>
            <person name="Okai N."/>
            <person name="Suzuki N."/>
            <person name="Suda M."/>
            <person name="Tsuge Y."/>
            <person name="Watanabe J."/>
            <person name="Ikeda Y."/>
            <person name="Vertes A.A."/>
            <person name="Inui M."/>
        </authorList>
    </citation>
    <scope>NUCLEOTIDE SEQUENCE [LARGE SCALE GENOMIC DNA]</scope>
    <source>
        <strain>R</strain>
    </source>
</reference>
<organism>
    <name type="scientific">Corynebacterium glutamicum (strain R)</name>
    <dbReference type="NCBI Taxonomy" id="340322"/>
    <lineage>
        <taxon>Bacteria</taxon>
        <taxon>Bacillati</taxon>
        <taxon>Actinomycetota</taxon>
        <taxon>Actinomycetes</taxon>
        <taxon>Mycobacteriales</taxon>
        <taxon>Corynebacteriaceae</taxon>
        <taxon>Corynebacterium</taxon>
    </lineage>
</organism>